<reference key="1">
    <citation type="journal article" date="1993" name="Plant Mol. Biol.">
        <title>Organization of plastid-encoded ATPase genes and flanking regions including homologues of infB and tsf in the thermophilic red alga Galdieria sulphuraria.</title>
        <authorList>
            <person name="Kostrzewa M."/>
            <person name="Zetsche K."/>
        </authorList>
    </citation>
    <scope>NUCLEOTIDE SEQUENCE [GENOMIC DNA]</scope>
    <source>
        <strain>14-1-1 / Isolate 107.79/Goettingen</strain>
    </source>
</reference>
<evidence type="ECO:0000255" key="1">
    <source>
        <dbReference type="HAMAP-Rule" id="MF_01416"/>
    </source>
</evidence>
<feature type="chain" id="PRO_0000193501" description="ATP synthase subunit delta, chloroplastic">
    <location>
        <begin position="1"/>
        <end position="177"/>
    </location>
</feature>
<name>ATPD_GALSU</name>
<sequence>MHNNYKIAKVYAEGLFEIANTKNSLAEINEQLNSIKSVLKQMPEFYYFLVNPLISQQIKKNTIKIVFNNNLDKITLNFLLILIERRRIIYFYDIVDQFILIWNKATNTSVVEIASVISLTEKQQQYLINKLKEITKANYIKLKLKIDPSLIGGLIIKFGSNLIDLSLKGKLKNSPYI</sequence>
<dbReference type="EMBL" id="X67814">
    <property type="protein sequence ID" value="CAA48024.1"/>
    <property type="molecule type" value="Genomic_DNA"/>
</dbReference>
<dbReference type="SMR" id="P35010"/>
<dbReference type="GO" id="GO:0009535">
    <property type="term" value="C:chloroplast thylakoid membrane"/>
    <property type="evidence" value="ECO:0007669"/>
    <property type="project" value="UniProtKB-SubCell"/>
</dbReference>
<dbReference type="GO" id="GO:0045259">
    <property type="term" value="C:proton-transporting ATP synthase complex"/>
    <property type="evidence" value="ECO:0007669"/>
    <property type="project" value="UniProtKB-KW"/>
</dbReference>
<dbReference type="GO" id="GO:0046933">
    <property type="term" value="F:proton-transporting ATP synthase activity, rotational mechanism"/>
    <property type="evidence" value="ECO:0007669"/>
    <property type="project" value="UniProtKB-UniRule"/>
</dbReference>
<dbReference type="Gene3D" id="1.10.520.20">
    <property type="entry name" value="N-terminal domain of the delta subunit of the F1F0-ATP synthase"/>
    <property type="match status" value="1"/>
</dbReference>
<dbReference type="HAMAP" id="MF_01416">
    <property type="entry name" value="ATP_synth_delta_bact"/>
    <property type="match status" value="1"/>
</dbReference>
<dbReference type="InterPro" id="IPR026015">
    <property type="entry name" value="ATP_synth_OSCP/delta_N_sf"/>
</dbReference>
<dbReference type="InterPro" id="IPR020781">
    <property type="entry name" value="ATPase_OSCP/d_CS"/>
</dbReference>
<dbReference type="InterPro" id="IPR000711">
    <property type="entry name" value="ATPase_OSCP/dsu"/>
</dbReference>
<dbReference type="NCBIfam" id="TIGR01145">
    <property type="entry name" value="ATP_synt_delta"/>
    <property type="match status" value="1"/>
</dbReference>
<dbReference type="PANTHER" id="PTHR11910">
    <property type="entry name" value="ATP SYNTHASE DELTA CHAIN"/>
    <property type="match status" value="1"/>
</dbReference>
<dbReference type="Pfam" id="PF00213">
    <property type="entry name" value="OSCP"/>
    <property type="match status" value="1"/>
</dbReference>
<dbReference type="PRINTS" id="PR00125">
    <property type="entry name" value="ATPASEDELTA"/>
</dbReference>
<dbReference type="SUPFAM" id="SSF47928">
    <property type="entry name" value="N-terminal domain of the delta subunit of the F1F0-ATP synthase"/>
    <property type="match status" value="1"/>
</dbReference>
<dbReference type="PROSITE" id="PS00389">
    <property type="entry name" value="ATPASE_DELTA"/>
    <property type="match status" value="1"/>
</dbReference>
<geneLocation type="chloroplast"/>
<comment type="function">
    <text evidence="1">F(1)F(0) ATP synthase produces ATP from ADP in the presence of a proton or sodium gradient. F-type ATPases consist of two structural domains, F(1) containing the extramembraneous catalytic core and F(0) containing the membrane proton channel, linked together by a central stalk and a peripheral stalk. During catalysis, ATP synthesis in the catalytic domain of F(1) is coupled via a rotary mechanism of the central stalk subunits to proton translocation.</text>
</comment>
<comment type="function">
    <text evidence="1">This protein is part of the stalk that links CF(0) to CF(1). It either transmits conformational changes from CF(0) to CF(1) or is implicated in proton conduction.</text>
</comment>
<comment type="subunit">
    <text evidence="1">F-type ATPases have 2 components, F(1) - the catalytic core - and F(0) - the membrane proton channel. F(1) has five subunits: alpha(3), beta(3), gamma(1), delta(1), epsilon(1). CF(0) has four main subunits: a(1), b(1), b'(1) and c(10-14). The alpha and beta chains form an alternating ring which encloses part of the gamma chain. F(1) is attached to F(0) by a central stalk formed by the gamma and epsilon chains, while a peripheral stalk is formed by the delta, b and b' chains.</text>
</comment>
<comment type="subcellular location">
    <subcellularLocation>
        <location evidence="1">Plastid</location>
        <location evidence="1">Chloroplast thylakoid membrane</location>
        <topology evidence="1">Peripheral membrane protein</topology>
    </subcellularLocation>
</comment>
<comment type="similarity">
    <text evidence="1">Belongs to the ATPase delta chain family.</text>
</comment>
<accession>P35010</accession>
<keyword id="KW-0066">ATP synthesis</keyword>
<keyword id="KW-0139">CF(1)</keyword>
<keyword id="KW-0150">Chloroplast</keyword>
<keyword id="KW-0375">Hydrogen ion transport</keyword>
<keyword id="KW-0406">Ion transport</keyword>
<keyword id="KW-0472">Membrane</keyword>
<keyword id="KW-0934">Plastid</keyword>
<keyword id="KW-0793">Thylakoid</keyword>
<keyword id="KW-0813">Transport</keyword>
<gene>
    <name evidence="1" type="primary">atpD</name>
</gene>
<organism>
    <name type="scientific">Galdieria sulphuraria</name>
    <name type="common">Red alga</name>
    <dbReference type="NCBI Taxonomy" id="130081"/>
    <lineage>
        <taxon>Eukaryota</taxon>
        <taxon>Rhodophyta</taxon>
        <taxon>Bangiophyceae</taxon>
        <taxon>Galdieriales</taxon>
        <taxon>Galdieriaceae</taxon>
        <taxon>Galdieria</taxon>
    </lineage>
</organism>
<proteinExistence type="inferred from homology"/>
<protein>
    <recommendedName>
        <fullName evidence="1">ATP synthase subunit delta, chloroplastic</fullName>
    </recommendedName>
    <alternativeName>
        <fullName evidence="1">ATP synthase F(1) sector subunit delta</fullName>
    </alternativeName>
    <alternativeName>
        <fullName evidence="1">F-type ATPase subunit delta</fullName>
    </alternativeName>
</protein>